<protein>
    <recommendedName>
        <fullName>Nicotinate phosphoribosyltransferase</fullName>
        <shortName>NAPRTase</shortName>
        <ecNumber evidence="3 4 5">6.3.4.21</ecNumber>
    </recommendedName>
    <alternativeName>
        <fullName>FHA-HIT-interacting protein</fullName>
    </alternativeName>
    <alternativeName>
        <fullName>Nicotinate phosphoribosyltransferase domain-containing protein 1</fullName>
    </alternativeName>
</protein>
<proteinExistence type="evidence at protein level"/>
<keyword id="KW-0002">3D-structure</keyword>
<keyword id="KW-0025">Alternative splicing</keyword>
<keyword id="KW-0963">Cytoplasm</keyword>
<keyword id="KW-0436">Ligase</keyword>
<keyword id="KW-0460">Magnesium</keyword>
<keyword id="KW-0464">Manganese</keyword>
<keyword id="KW-0479">Metal-binding</keyword>
<keyword id="KW-0597">Phosphoprotein</keyword>
<keyword id="KW-1267">Proteomics identification</keyword>
<keyword id="KW-0662">Pyridine nucleotide biosynthesis</keyword>
<keyword id="KW-1185">Reference proteome</keyword>
<keyword id="KW-0808">Transferase</keyword>
<sequence length="538" mass="57578">MAAEQDPEARAAARPLLTDLYQATMALGYWRAGRARDAAEFELFFRRCPFGGAFALAAGLRDCVRFLRAFRLRDADVQFLASVLPPDTDPAFFEHLRALDCSEVTVRALPEGSLAFPGVPLLQVSGPLLVVQLLETPLLCLVSYASLVATNAARLRLIAGPEKRLLEMGLRRAQGPDGGLTASTYSYLGGFDSSSNVLAGQLRGVPVAGTLAHSFVTSFSGSEVPPDPMLAPAAGEGPGVDLAAKAQVWLEQVCAHLGLGVQEPHPGERAAFVAYALAFPRAFQGLLDTYSVWRSGLPNFLAVALALGELGYRAVGVRLDSGDLLQQAQEIRKVFRAAAAQFQVPWLESVLIVVSNNIDEEALARLAQEGSEVNVIGIGTSVVTCPQQPSLGGVYKLVAVGGQPRMKLTEDPEKQTLPGSKAAFRLLGSDGSPLMDMLQLAEEPVPQAGQELRVWPPGAQEPCTVRPAQVEPLLRLCLQQGQLCEPLPSLAESRALAQLSLSRLSPEHRRLRSPAQYQVVLSERLQALVNSLCAGQSP</sequence>
<accession>Q6XQN6</accession>
<accession>A7BFI3</accession>
<accession>Q6PJL1</accession>
<accession>Q6XQN4</accession>
<accession>Q6XQN5</accession>
<accession>Q8N5E8</accession>
<accession>Q9BRG0</accession>
<organism>
    <name type="scientific">Homo sapiens</name>
    <name type="common">Human</name>
    <dbReference type="NCBI Taxonomy" id="9606"/>
    <lineage>
        <taxon>Eukaryota</taxon>
        <taxon>Metazoa</taxon>
        <taxon>Chordata</taxon>
        <taxon>Craniata</taxon>
        <taxon>Vertebrata</taxon>
        <taxon>Euteleostomi</taxon>
        <taxon>Mammalia</taxon>
        <taxon>Eutheria</taxon>
        <taxon>Euarchontoglires</taxon>
        <taxon>Primates</taxon>
        <taxon>Haplorrhini</taxon>
        <taxon>Catarrhini</taxon>
        <taxon>Hominidae</taxon>
        <taxon>Homo</taxon>
    </lineage>
</organism>
<reference key="1">
    <citation type="journal article" date="2007" name="J. Biol. Chem.">
        <title>Elevation of cellular NAD levels by nicotinic acid and involvement of nicotinic acid phosphoribosyltransferase in human cells.</title>
        <authorList>
            <person name="Hara N."/>
            <person name="Yamada K."/>
            <person name="Shibata T."/>
            <person name="Osago H."/>
            <person name="Hashimoto T."/>
            <person name="Tsuchiya M."/>
        </authorList>
    </citation>
    <scope>NUCLEOTIDE SEQUENCE [MRNA] (ISOFORM 1)</scope>
    <scope>FUNCTION</scope>
    <scope>CATALYTIC ACTIVITY</scope>
    <scope>SUBCELLULAR LOCATION</scope>
    <scope>PATHWAY</scope>
</reference>
<reference key="2">
    <citation type="submission" date="2003-01" db="EMBL/GenBank/DDBJ databases">
        <title>Identification of nicotinate phosphoribosyltransferase as a novel FHA-HIT interaction protein (FHIP).</title>
        <authorList>
            <person name="Huang C.-H."/>
            <person name="Chen H."/>
            <person name="Chen Y."/>
        </authorList>
    </citation>
    <scope>NUCLEOTIDE SEQUENCE [MRNA] (ISOFORMS 1; 2 AND 3)</scope>
</reference>
<reference key="3">
    <citation type="journal article" date="2004" name="Genome Res.">
        <title>The status, quality, and expansion of the NIH full-length cDNA project: the Mammalian Gene Collection (MGC).</title>
        <authorList>
            <consortium name="The MGC Project Team"/>
        </authorList>
    </citation>
    <scope>NUCLEOTIDE SEQUENCE [LARGE SCALE MRNA] (ISOFORM 1)</scope>
    <source>
        <tissue>Placenta</tissue>
    </source>
</reference>
<reference key="4">
    <citation type="journal article" date="2006" name="Cell">
        <title>Global, in vivo, and site-specific phosphorylation dynamics in signaling networks.</title>
        <authorList>
            <person name="Olsen J.V."/>
            <person name="Blagoev B."/>
            <person name="Gnad F."/>
            <person name="Macek B."/>
            <person name="Kumar C."/>
            <person name="Mortensen P."/>
            <person name="Mann M."/>
        </authorList>
    </citation>
    <scope>PHOSPHORYLATION [LARGE SCALE ANALYSIS] AT SER-537</scope>
    <scope>IDENTIFICATION BY MASS SPECTROMETRY [LARGE SCALE ANALYSIS]</scope>
    <source>
        <tissue>Cervix carcinoma</tissue>
    </source>
</reference>
<reference key="5">
    <citation type="journal article" date="2006" name="Nat. Biotechnol.">
        <title>A probability-based approach for high-throughput protein phosphorylation analysis and site localization.</title>
        <authorList>
            <person name="Beausoleil S.A."/>
            <person name="Villen J."/>
            <person name="Gerber S.A."/>
            <person name="Rush J."/>
            <person name="Gygi S.P."/>
        </authorList>
    </citation>
    <scope>PHOSPHORYLATION [LARGE SCALE ANALYSIS] AT SER-537</scope>
    <scope>IDENTIFICATION BY MASS SPECTROMETRY [LARGE SCALE ANALYSIS]</scope>
    <source>
        <tissue>Cervix carcinoma</tissue>
    </source>
</reference>
<reference key="6">
    <citation type="journal article" date="2008" name="Proc. Natl. Acad. Sci. U.S.A.">
        <title>A quantitative atlas of mitotic phosphorylation.</title>
        <authorList>
            <person name="Dephoure N."/>
            <person name="Zhou C."/>
            <person name="Villen J."/>
            <person name="Beausoleil S.A."/>
            <person name="Bakalarski C.E."/>
            <person name="Elledge S.J."/>
            <person name="Gygi S.P."/>
        </authorList>
    </citation>
    <scope>PHOSPHORYLATION [LARGE SCALE ANALYSIS] AT SER-537</scope>
    <scope>IDENTIFICATION BY MASS SPECTROMETRY [LARGE SCALE ANALYSIS]</scope>
    <source>
        <tissue>Cervix carcinoma</tissue>
    </source>
</reference>
<reference key="7">
    <citation type="journal article" date="2010" name="Sci. Signal.">
        <title>Quantitative phosphoproteomics reveals widespread full phosphorylation site occupancy during mitosis.</title>
        <authorList>
            <person name="Olsen J.V."/>
            <person name="Vermeulen M."/>
            <person name="Santamaria A."/>
            <person name="Kumar C."/>
            <person name="Miller M.L."/>
            <person name="Jensen L.J."/>
            <person name="Gnad F."/>
            <person name="Cox J."/>
            <person name="Jensen T.S."/>
            <person name="Nigg E.A."/>
            <person name="Brunak S."/>
            <person name="Mann M."/>
        </authorList>
    </citation>
    <scope>PHOSPHORYLATION [LARGE SCALE ANALYSIS] AT SER-537</scope>
    <scope>IDENTIFICATION BY MASS SPECTROMETRY [LARGE SCALE ANALYSIS]</scope>
    <source>
        <tissue>Cervix carcinoma</tissue>
    </source>
</reference>
<reference key="8">
    <citation type="journal article" date="2011" name="BMC Syst. Biol.">
        <title>Initial characterization of the human central proteome.</title>
        <authorList>
            <person name="Burkard T.R."/>
            <person name="Planyavsky M."/>
            <person name="Kaupe I."/>
            <person name="Breitwieser F.P."/>
            <person name="Buerckstuemmer T."/>
            <person name="Bennett K.L."/>
            <person name="Superti-Furga G."/>
            <person name="Colinge J."/>
        </authorList>
    </citation>
    <scope>IDENTIFICATION BY MASS SPECTROMETRY [LARGE SCALE ANALYSIS]</scope>
</reference>
<reference key="9">
    <citation type="journal article" date="2011" name="Sci. Signal.">
        <title>System-wide temporal characterization of the proteome and phosphoproteome of human embryonic stem cell differentiation.</title>
        <authorList>
            <person name="Rigbolt K.T."/>
            <person name="Prokhorova T.A."/>
            <person name="Akimov V."/>
            <person name="Henningsen J."/>
            <person name="Johansen P.T."/>
            <person name="Kratchmarova I."/>
            <person name="Kassem M."/>
            <person name="Mann M."/>
            <person name="Olsen J.V."/>
            <person name="Blagoev B."/>
        </authorList>
    </citation>
    <scope>PHOSPHORYLATION [LARGE SCALE ANALYSIS] AT SER-537</scope>
    <scope>IDENTIFICATION BY MASS SPECTROMETRY [LARGE SCALE ANALYSIS]</scope>
</reference>
<reference key="10">
    <citation type="journal article" date="2012" name="Biochimie">
        <title>Characterization of human nicotinate phosphoribosyltransferase: Kinetic studies, structure prediction and functional analysis by site-directed mutagenesis.</title>
        <authorList>
            <person name="Galassi L."/>
            <person name="Di Stefano M."/>
            <person name="Brunetti L."/>
            <person name="Orsomando G."/>
            <person name="Amici A."/>
            <person name="Ruggieri S."/>
            <person name="Magni G."/>
        </authorList>
    </citation>
    <scope>CATALYTIC ACTIVITY</scope>
    <scope>FUNCTION</scope>
    <scope>COFACTOR</scope>
    <scope>BIOPHYSICOCHEMICAL PROPERTIES</scope>
    <scope>SUBUNIT</scope>
    <scope>3D-STRUCTURE MODELING</scope>
    <scope>PATHWAY</scope>
    <scope>MUTAGENESIS OF ASP-19; TYR-21; GLY-169; GLY-209; HIS-213; ASP-288; ARG-318; ASN-357; GLY-379; THR-380 AND SER-381</scope>
</reference>
<reference key="11">
    <citation type="journal article" date="2014" name="J. Proteomics">
        <title>An enzyme assisted RP-RPLC approach for in-depth analysis of human liver phosphoproteome.</title>
        <authorList>
            <person name="Bian Y."/>
            <person name="Song C."/>
            <person name="Cheng K."/>
            <person name="Dong M."/>
            <person name="Wang F."/>
            <person name="Huang J."/>
            <person name="Sun D."/>
            <person name="Wang L."/>
            <person name="Ye M."/>
            <person name="Zou H."/>
        </authorList>
    </citation>
    <scope>PHOSPHORYLATION [LARGE SCALE ANALYSIS] AT SER-537</scope>
    <scope>IDENTIFICATION BY MASS SPECTROMETRY [LARGE SCALE ANALYSIS]</scope>
    <source>
        <tissue>Liver</tissue>
    </source>
</reference>
<reference evidence="9" key="12">
    <citation type="journal article" date="2015" name="FEBS Open Bio">
        <title>Crystal structure of human nicotinic acid phosphoribosyltransferase.</title>
        <authorList>
            <person name="Marletta A.S."/>
            <person name="Massarotti A."/>
            <person name="Orsomando G."/>
            <person name="Magni G."/>
            <person name="Rizzi M."/>
            <person name="Garavaglia S."/>
        </authorList>
    </citation>
    <scope>X-RAY CRYSTALLOGRAPHY (2.90 ANGSTROMS)</scope>
    <scope>FUNCTION</scope>
    <scope>CATALYTIC ACTIVITY</scope>
    <scope>PATHWAY</scope>
    <scope>SUBUNIT</scope>
</reference>
<comment type="function">
    <text evidence="3 4 5">Catalyzes the first step in the biosynthesis of NAD from nicotinic acid, the ATP-dependent synthesis of beta-nicotinate D-ribonucleotide from nicotinate and 5-phospho-D-ribose 1-phosphate (PubMed:17604275, PubMed:21742010, PubMed:26042198). Helps prevent cellular oxidative stress via its role in NAD biosynthesis (PubMed:17604275).</text>
</comment>
<comment type="catalytic activity">
    <reaction evidence="3 4 5">
        <text>nicotinate + 5-phospho-alpha-D-ribose 1-diphosphate + ATP + H2O = nicotinate beta-D-ribonucleotide + ADP + phosphate + diphosphate</text>
        <dbReference type="Rhea" id="RHEA:36163"/>
        <dbReference type="ChEBI" id="CHEBI:15377"/>
        <dbReference type="ChEBI" id="CHEBI:30616"/>
        <dbReference type="ChEBI" id="CHEBI:32544"/>
        <dbReference type="ChEBI" id="CHEBI:33019"/>
        <dbReference type="ChEBI" id="CHEBI:43474"/>
        <dbReference type="ChEBI" id="CHEBI:57502"/>
        <dbReference type="ChEBI" id="CHEBI:58017"/>
        <dbReference type="ChEBI" id="CHEBI:456216"/>
        <dbReference type="EC" id="6.3.4.21"/>
    </reaction>
</comment>
<comment type="cofactor">
    <cofactor evidence="4">
        <name>Mg(2+)</name>
        <dbReference type="ChEBI" id="CHEBI:18420"/>
    </cofactor>
    <cofactor evidence="4">
        <name>Mn(2+)</name>
        <dbReference type="ChEBI" id="CHEBI:29035"/>
    </cofactor>
    <text evidence="4">Activity is highest with Mn(2+).</text>
</comment>
<comment type="biophysicochemical properties">
    <kinetics>
        <KM evidence="4">44.3 uM for nicotinic acid (in the presence of 3 mM ATP)</KM>
        <KM evidence="4">22.1 uM for 5-phosphoribosyl-1-pyrophosphate (in the presence of 3 mM ATP)</KM>
        <KM evidence="4">27.3 uM for nicotinic acid (in the presence of inorganic phosphate)</KM>
        <KM evidence="4">38.2 uM for 5-phosphoribosyl-1-pyrophosphate (in the presence of inorganic phosphate)</KM>
    </kinetics>
</comment>
<comment type="pathway">
    <text evidence="3 4 5">Cofactor biosynthesis; NAD(+) biosynthesis; nicotinate D-ribonucleotide from nicotinate: step 1/1.</text>
</comment>
<comment type="subunit">
    <text evidence="5 8">Homodimer.</text>
</comment>
<comment type="interaction">
    <interactant intactId="EBI-10254872">
        <id>Q6XQN6</id>
    </interactant>
    <interactant intactId="EBI-2832937">
        <id>Q96HH9</id>
        <label>GRAMD2B</label>
    </interactant>
    <organismsDiffer>false</organismsDiffer>
    <experiments>3</experiments>
</comment>
<comment type="interaction">
    <interactant intactId="EBI-10254872">
        <id>Q6XQN6</id>
    </interactant>
    <interactant intactId="EBI-740322">
        <id>Q93062</id>
        <label>RBPMS</label>
    </interactant>
    <organismsDiffer>false</organismsDiffer>
    <experiments>3</experiments>
</comment>
<comment type="interaction">
    <interactant intactId="EBI-10254820">
        <id>Q6XQN6-2</id>
    </interactant>
    <interactant intactId="EBI-2808286">
        <id>Q2TAC2</id>
        <label>CCDC57</label>
    </interactant>
    <organismsDiffer>false</organismsDiffer>
    <experiments>3</experiments>
</comment>
<comment type="interaction">
    <interactant intactId="EBI-10254820">
        <id>Q6XQN6-2</id>
    </interactant>
    <interactant intactId="EBI-10174566">
        <id>A2ABF9</id>
        <label>EHMT2</label>
    </interactant>
    <organismsDiffer>false</organismsDiffer>
    <experiments>3</experiments>
</comment>
<comment type="interaction">
    <interactant intactId="EBI-10254820">
        <id>Q6XQN6-2</id>
    </interactant>
    <interactant intactId="EBI-10171697">
        <id>Q6A162</id>
        <label>KRT40</label>
    </interactant>
    <organismsDiffer>false</organismsDiffer>
    <experiments>3</experiments>
</comment>
<comment type="interaction">
    <interactant intactId="EBI-10254820">
        <id>Q6XQN6-2</id>
    </interactant>
    <interactant intactId="EBI-740322">
        <id>Q93062</id>
        <label>RBPMS</label>
    </interactant>
    <organismsDiffer>false</organismsDiffer>
    <experiments>3</experiments>
</comment>
<comment type="subcellular location">
    <subcellularLocation>
        <location evidence="3">Cytoplasm</location>
        <location evidence="3">Cytosol</location>
    </subcellularLocation>
</comment>
<comment type="alternative products">
    <event type="alternative splicing"/>
    <isoform>
        <id>Q6XQN6-1</id>
        <name>1</name>
        <sequence type="displayed"/>
    </isoform>
    <isoform>
        <id>Q6XQN6-2</id>
        <name>2</name>
        <sequence type="described" ref="VSP_030612"/>
    </isoform>
    <isoform>
        <id>Q6XQN6-3</id>
        <name>3</name>
        <sequence type="described" ref="VSP_030610"/>
    </isoform>
</comment>
<comment type="PTM">
    <text evidence="1">Transiently phosphorylated on a His residue during the reaction cycle. Phosphorylation strongly increases the affinity for substrates and increases the rate of nicotinate D-ribonucleotide production. Dephosphorylation regenerates the low-affinity form of the enzyme, leading to product release.</text>
</comment>
<comment type="similarity">
    <text evidence="7">Belongs to the NAPRTase family.</text>
</comment>
<comment type="sequence caution" evidence="7">
    <conflict type="erroneous initiation">
        <sequence resource="EMBL-CDS" id="AAH06284"/>
    </conflict>
    <text>Truncated N-terminus.</text>
</comment>
<comment type="sequence caution" evidence="7">
    <conflict type="erroneous initiation">
        <sequence resource="EMBL-CDS" id="AAH32466"/>
    </conflict>
    <text>Truncated N-terminus.</text>
</comment>
<dbReference type="EC" id="6.3.4.21" evidence="3 4 5"/>
<dbReference type="EMBL" id="AB242230">
    <property type="protein sequence ID" value="BAF75377.1"/>
    <property type="molecule type" value="mRNA"/>
</dbReference>
<dbReference type="EMBL" id="AY214325">
    <property type="protein sequence ID" value="AAP69603.1"/>
    <property type="molecule type" value="mRNA"/>
</dbReference>
<dbReference type="EMBL" id="AY214326">
    <property type="protein sequence ID" value="AAP69604.1"/>
    <property type="molecule type" value="mRNA"/>
</dbReference>
<dbReference type="EMBL" id="AY214327">
    <property type="protein sequence ID" value="AAP69605.1"/>
    <property type="molecule type" value="mRNA"/>
</dbReference>
<dbReference type="EMBL" id="BC006284">
    <property type="protein sequence ID" value="AAH06284.2"/>
    <property type="status" value="ALT_INIT"/>
    <property type="molecule type" value="mRNA"/>
</dbReference>
<dbReference type="EMBL" id="BC032466">
    <property type="protein sequence ID" value="AAH32466.1"/>
    <property type="status" value="ALT_INIT"/>
    <property type="molecule type" value="mRNA"/>
</dbReference>
<dbReference type="CCDS" id="CCDS6403.2">
    <molecule id="Q6XQN6-1"/>
</dbReference>
<dbReference type="CCDS" id="CCDS69555.1">
    <molecule id="Q6XQN6-3"/>
</dbReference>
<dbReference type="RefSeq" id="NP_001273758.1">
    <molecule id="Q6XQN6-3"/>
    <property type="nucleotide sequence ID" value="NM_001286829.2"/>
</dbReference>
<dbReference type="RefSeq" id="NP_660202.3">
    <molecule id="Q6XQN6-1"/>
    <property type="nucleotide sequence ID" value="NM_145201.5"/>
</dbReference>
<dbReference type="RefSeq" id="XP_016869469.1">
    <property type="nucleotide sequence ID" value="XM_017013980.1"/>
</dbReference>
<dbReference type="PDB" id="4YUB">
    <property type="method" value="X-ray"/>
    <property type="resolution" value="2.90 A"/>
    <property type="chains" value="A/B=1-538"/>
</dbReference>
<dbReference type="PDBsum" id="4YUB"/>
<dbReference type="SMR" id="Q6XQN6"/>
<dbReference type="BioGRID" id="125001">
    <property type="interactions" value="49"/>
</dbReference>
<dbReference type="FunCoup" id="Q6XQN6">
    <property type="interactions" value="397"/>
</dbReference>
<dbReference type="IntAct" id="Q6XQN6">
    <property type="interactions" value="13"/>
</dbReference>
<dbReference type="STRING" id="9606.ENSP00000401508"/>
<dbReference type="ChEMBL" id="CHEMBL4523354"/>
<dbReference type="DrugCentral" id="Q6XQN6"/>
<dbReference type="iPTMnet" id="Q6XQN6"/>
<dbReference type="PhosphoSitePlus" id="Q6XQN6"/>
<dbReference type="SwissPalm" id="Q6XQN6"/>
<dbReference type="BioMuta" id="NAPRT"/>
<dbReference type="DMDM" id="166221824"/>
<dbReference type="jPOST" id="Q6XQN6"/>
<dbReference type="MassIVE" id="Q6XQN6"/>
<dbReference type="PaxDb" id="9606-ENSP00000401508"/>
<dbReference type="PeptideAtlas" id="Q6XQN6"/>
<dbReference type="PRIDE" id="Q6XQN6"/>
<dbReference type="ProteomicsDB" id="67810">
    <molecule id="Q6XQN6-1"/>
</dbReference>
<dbReference type="ProteomicsDB" id="67811">
    <molecule id="Q6XQN6-2"/>
</dbReference>
<dbReference type="ProteomicsDB" id="67812">
    <molecule id="Q6XQN6-3"/>
</dbReference>
<dbReference type="Pumba" id="Q6XQN6"/>
<dbReference type="Antibodypedia" id="14617">
    <property type="antibodies" value="191 antibodies from 28 providers"/>
</dbReference>
<dbReference type="DNASU" id="93100"/>
<dbReference type="Ensembl" id="ENST00000426292.7">
    <molecule id="Q6XQN6-3"/>
    <property type="protein sequence ID" value="ENSP00000390949.3"/>
    <property type="gene ID" value="ENSG00000147813.16"/>
</dbReference>
<dbReference type="Ensembl" id="ENST00000449291.7">
    <molecule id="Q6XQN6-1"/>
    <property type="protein sequence ID" value="ENSP00000401508.2"/>
    <property type="gene ID" value="ENSG00000147813.16"/>
</dbReference>
<dbReference type="Ensembl" id="ENST00000621955.1">
    <molecule id="Q6XQN6-1"/>
    <property type="protein sequence ID" value="ENSP00000480017.1"/>
    <property type="gene ID" value="ENSG00000278488.2"/>
</dbReference>
<dbReference type="Ensembl" id="ENST00000632139.1">
    <molecule id="Q6XQN6-3"/>
    <property type="protein sequence ID" value="ENSP00000488794.1"/>
    <property type="gene ID" value="ENSG00000278488.2"/>
</dbReference>
<dbReference type="GeneID" id="93100"/>
<dbReference type="KEGG" id="hsa:93100"/>
<dbReference type="MANE-Select" id="ENST00000449291.7">
    <property type="protein sequence ID" value="ENSP00000401508.2"/>
    <property type="RefSeq nucleotide sequence ID" value="NM_145201.6"/>
    <property type="RefSeq protein sequence ID" value="NP_660202.3"/>
</dbReference>
<dbReference type="UCSC" id="uc003yym.6">
    <molecule id="Q6XQN6-1"/>
    <property type="organism name" value="human"/>
</dbReference>
<dbReference type="AGR" id="HGNC:30450"/>
<dbReference type="CTD" id="93100"/>
<dbReference type="DisGeNET" id="93100"/>
<dbReference type="GeneCards" id="NAPRT"/>
<dbReference type="HGNC" id="HGNC:30450">
    <property type="gene designation" value="NAPRT"/>
</dbReference>
<dbReference type="HPA" id="ENSG00000147813">
    <property type="expression patterns" value="Tissue enhanced (liver)"/>
</dbReference>
<dbReference type="MIM" id="611552">
    <property type="type" value="gene"/>
</dbReference>
<dbReference type="neXtProt" id="NX_Q6XQN6"/>
<dbReference type="OpenTargets" id="ENSG00000147813"/>
<dbReference type="PharmGKB" id="PA142671293"/>
<dbReference type="VEuPathDB" id="HostDB:ENSG00000147813"/>
<dbReference type="eggNOG" id="KOG2511">
    <property type="taxonomic scope" value="Eukaryota"/>
</dbReference>
<dbReference type="GeneTree" id="ENSGT00940000153456"/>
<dbReference type="InParanoid" id="Q6XQN6"/>
<dbReference type="OMA" id="VYFPGSP"/>
<dbReference type="OrthoDB" id="193380at2759"/>
<dbReference type="PAN-GO" id="Q6XQN6">
    <property type="GO annotations" value="3 GO annotations based on evolutionary models"/>
</dbReference>
<dbReference type="PhylomeDB" id="Q6XQN6"/>
<dbReference type="TreeFam" id="TF314732"/>
<dbReference type="BRENDA" id="6.3.4.21">
    <property type="organism ID" value="2681"/>
</dbReference>
<dbReference type="PathwayCommons" id="Q6XQN6"/>
<dbReference type="Reactome" id="R-HSA-197264">
    <property type="pathway name" value="Nicotinamide salvaging"/>
</dbReference>
<dbReference type="Reactome" id="R-HSA-6798695">
    <property type="pathway name" value="Neutrophil degranulation"/>
</dbReference>
<dbReference type="SABIO-RK" id="Q6XQN6"/>
<dbReference type="SignaLink" id="Q6XQN6"/>
<dbReference type="UniPathway" id="UPA00253">
    <property type="reaction ID" value="UER00457"/>
</dbReference>
<dbReference type="BioGRID-ORCS" id="93100">
    <property type="hits" value="15 hits in 1155 CRISPR screens"/>
</dbReference>
<dbReference type="ChiTaRS" id="NAPRT">
    <property type="organism name" value="human"/>
</dbReference>
<dbReference type="EvolutionaryTrace" id="Q6XQN6"/>
<dbReference type="GenomeRNAi" id="93100"/>
<dbReference type="Pharos" id="Q6XQN6">
    <property type="development level" value="Tchem"/>
</dbReference>
<dbReference type="PRO" id="PR:Q6XQN6"/>
<dbReference type="Proteomes" id="UP000005640">
    <property type="component" value="Chromosome 8"/>
</dbReference>
<dbReference type="RNAct" id="Q6XQN6">
    <property type="molecule type" value="protein"/>
</dbReference>
<dbReference type="Bgee" id="ENSG00000147813">
    <property type="expression patterns" value="Expressed in mucosa of transverse colon and 94 other cell types or tissues"/>
</dbReference>
<dbReference type="ExpressionAtlas" id="Q6XQN6">
    <property type="expression patterns" value="baseline and differential"/>
</dbReference>
<dbReference type="GO" id="GO:0035578">
    <property type="term" value="C:azurophil granule lumen"/>
    <property type="evidence" value="ECO:0000304"/>
    <property type="project" value="Reactome"/>
</dbReference>
<dbReference type="GO" id="GO:0005829">
    <property type="term" value="C:cytosol"/>
    <property type="evidence" value="ECO:0000314"/>
    <property type="project" value="UniProtKB"/>
</dbReference>
<dbReference type="GO" id="GO:0070062">
    <property type="term" value="C:extracellular exosome"/>
    <property type="evidence" value="ECO:0007005"/>
    <property type="project" value="UniProtKB"/>
</dbReference>
<dbReference type="GO" id="GO:0005576">
    <property type="term" value="C:extracellular region"/>
    <property type="evidence" value="ECO:0000304"/>
    <property type="project" value="Reactome"/>
</dbReference>
<dbReference type="GO" id="GO:0046872">
    <property type="term" value="F:metal ion binding"/>
    <property type="evidence" value="ECO:0007669"/>
    <property type="project" value="UniProtKB-KW"/>
</dbReference>
<dbReference type="GO" id="GO:0004516">
    <property type="term" value="F:nicotinate phosphoribosyltransferase activity"/>
    <property type="evidence" value="ECO:0000314"/>
    <property type="project" value="UniProtKB"/>
</dbReference>
<dbReference type="GO" id="GO:0016740">
    <property type="term" value="F:transferase activity"/>
    <property type="evidence" value="ECO:0007669"/>
    <property type="project" value="UniProtKB-KW"/>
</dbReference>
<dbReference type="GO" id="GO:0034355">
    <property type="term" value="P:NAD biosynthetic process via the salvage pathway"/>
    <property type="evidence" value="ECO:0000315"/>
    <property type="project" value="FlyBase"/>
</dbReference>
<dbReference type="GO" id="GO:0006979">
    <property type="term" value="P:response to oxidative stress"/>
    <property type="evidence" value="ECO:0000315"/>
    <property type="project" value="UniProtKB"/>
</dbReference>
<dbReference type="CDD" id="cd01570">
    <property type="entry name" value="NAPRTase_A"/>
    <property type="match status" value="1"/>
</dbReference>
<dbReference type="FunFam" id="3.20.140.10:FF:000005">
    <property type="entry name" value="Nicotinate phosphoribosyltransferase"/>
    <property type="match status" value="1"/>
</dbReference>
<dbReference type="FunFam" id="3.20.140.10:FF:000007">
    <property type="entry name" value="Nicotinate phosphoribosyltransferase"/>
    <property type="match status" value="1"/>
</dbReference>
<dbReference type="FunFam" id="3.20.20.70:FF:000126">
    <property type="entry name" value="Nicotinate phosphoribosyltransferase"/>
    <property type="match status" value="1"/>
</dbReference>
<dbReference type="FunFam" id="3.20.20.70:FF:000155">
    <property type="entry name" value="Nicotinate phosphoribosyltransferase"/>
    <property type="match status" value="1"/>
</dbReference>
<dbReference type="Gene3D" id="3.20.20.70">
    <property type="entry name" value="Aldolase class I"/>
    <property type="match status" value="1"/>
</dbReference>
<dbReference type="Gene3D" id="3.20.140.10">
    <property type="entry name" value="nicotinate phosphoribosyltransferase"/>
    <property type="match status" value="2"/>
</dbReference>
<dbReference type="InterPro" id="IPR013785">
    <property type="entry name" value="Aldolase_TIM"/>
</dbReference>
<dbReference type="InterPro" id="IPR041619">
    <property type="entry name" value="NAPRTase_C"/>
</dbReference>
<dbReference type="InterPro" id="IPR040727">
    <property type="entry name" value="NAPRTase_N"/>
</dbReference>
<dbReference type="InterPro" id="IPR007229">
    <property type="entry name" value="Nic_PRibTrfase-Fam"/>
</dbReference>
<dbReference type="InterPro" id="IPR006405">
    <property type="entry name" value="Nic_PRibTrfase_pncB"/>
</dbReference>
<dbReference type="InterPro" id="IPR036068">
    <property type="entry name" value="Nicotinate_pribotase-like_C"/>
</dbReference>
<dbReference type="NCBIfam" id="TIGR01513">
    <property type="entry name" value="NAPRTase_put"/>
    <property type="match status" value="1"/>
</dbReference>
<dbReference type="PANTHER" id="PTHR11098">
    <property type="entry name" value="NICOTINATE PHOSPHORIBOSYLTRANSFERASE"/>
    <property type="match status" value="1"/>
</dbReference>
<dbReference type="PANTHER" id="PTHR11098:SF1">
    <property type="entry name" value="NICOTINATE PHOSPHORIBOSYLTRANSFERASE"/>
    <property type="match status" value="1"/>
</dbReference>
<dbReference type="Pfam" id="PF17956">
    <property type="entry name" value="NAPRTase_C"/>
    <property type="match status" value="1"/>
</dbReference>
<dbReference type="Pfam" id="PF17767">
    <property type="entry name" value="NAPRTase_N"/>
    <property type="match status" value="1"/>
</dbReference>
<dbReference type="PIRSF" id="PIRSF000484">
    <property type="entry name" value="NAPRT"/>
    <property type="match status" value="1"/>
</dbReference>
<dbReference type="SUPFAM" id="SSF51690">
    <property type="entry name" value="Nicotinate/Quinolinate PRTase C-terminal domain-like"/>
    <property type="match status" value="1"/>
</dbReference>
<dbReference type="SUPFAM" id="SSF54675">
    <property type="entry name" value="Nicotinate/Quinolinate PRTase N-terminal domain-like"/>
    <property type="match status" value="1"/>
</dbReference>
<name>PNCB_HUMAN</name>
<gene>
    <name type="primary">NAPRT</name>
    <name type="synonym">FHIP</name>
    <name type="synonym">NAPRT1</name>
</gene>
<feature type="chain" id="PRO_0000315681" description="Nicotinate phosphoribosyltransferase">
    <location>
        <begin position="1"/>
        <end position="538"/>
    </location>
</feature>
<feature type="binding site" evidence="2">
    <location>
        <position position="21"/>
    </location>
    <ligand>
        <name>nicotinate</name>
        <dbReference type="ChEBI" id="CHEBI:32544"/>
    </ligand>
</feature>
<feature type="binding site" evidence="2">
    <location>
        <position position="210"/>
    </location>
    <ligand>
        <name>nicotinate</name>
        <dbReference type="ChEBI" id="CHEBI:32544"/>
    </ligand>
</feature>
<feature type="binding site" evidence="2">
    <location>
        <position position="318"/>
    </location>
    <ligand>
        <name>nicotinate</name>
        <dbReference type="ChEBI" id="CHEBI:32544"/>
    </ligand>
</feature>
<feature type="binding site" evidence="2">
    <location>
        <position position="380"/>
    </location>
    <ligand>
        <name>5-phospho-alpha-D-ribose 1-diphosphate</name>
        <dbReference type="ChEBI" id="CHEBI:58017"/>
    </ligand>
</feature>
<feature type="modified residue" description="Phosphohistidine" evidence="1">
    <location>
        <position position="213"/>
    </location>
</feature>
<feature type="modified residue" description="Phosphoserine" evidence="10 11 12 13 14 15">
    <location>
        <position position="537"/>
    </location>
</feature>
<feature type="splice variant" id="VSP_030610" description="In isoform 3." evidence="6">
    <location>
        <begin position="469"/>
        <end position="481"/>
    </location>
</feature>
<feature type="splice variant" id="VSP_030612" description="In isoform 2." evidence="6">
    <original>Y</original>
    <variation>YQVGGGGPPCHSALCAPALTLPTAPVLCSL</variation>
    <location>
        <position position="517"/>
    </location>
</feature>
<feature type="sequence variant" id="VAR_038275" description="In dbSNP:rs896950.">
    <original>A</original>
    <variation>V</variation>
    <location>
        <position position="57"/>
    </location>
</feature>
<feature type="mutagenesis site" description="Complete loss of activity." evidence="4">
    <original>D</original>
    <variation>A</variation>
    <location>
        <position position="19"/>
    </location>
</feature>
<feature type="mutagenesis site" description="Partial loss of activity in the presence of ATP, complete loss in the absence of ATP." evidence="4">
    <original>Y</original>
    <variation>A</variation>
    <location>
        <position position="21"/>
    </location>
</feature>
<feature type="mutagenesis site" description="Partial loss of activity." evidence="4">
    <original>G</original>
    <variation>A</variation>
    <location>
        <position position="169"/>
    </location>
</feature>
<feature type="mutagenesis site" description="Partial loss of activity." evidence="4">
    <original>G</original>
    <variation>A</variation>
    <location>
        <position position="209"/>
    </location>
</feature>
<feature type="mutagenesis site" description="Partial loss of activity." evidence="4">
    <original>H</original>
    <variation>A</variation>
    <location>
        <position position="213"/>
    </location>
</feature>
<feature type="mutagenesis site" description="Partial loss of activity." evidence="4">
    <original>D</original>
    <variation>A</variation>
    <location>
        <position position="288"/>
    </location>
</feature>
<feature type="mutagenesis site" description="Partial loss of activity in the presence of ATP, almost complete loss in the absence of ATP." evidence="4">
    <original>R</original>
    <variation>A</variation>
    <location>
        <position position="318"/>
    </location>
</feature>
<feature type="mutagenesis site" description="Small loss of activity." evidence="4">
    <original>N</original>
    <variation>A</variation>
    <location>
        <position position="357"/>
    </location>
</feature>
<feature type="mutagenesis site" description="Complete loss of activity." evidence="4">
    <original>G</original>
    <variation>A</variation>
    <location>
        <position position="379"/>
    </location>
</feature>
<feature type="mutagenesis site" description="Partial loss of activity." evidence="4">
    <original>T</original>
    <variation>A</variation>
    <location>
        <position position="380"/>
    </location>
</feature>
<feature type="mutagenesis site" description="Partial loss of activity." evidence="4">
    <original>S</original>
    <variation>A</variation>
    <location>
        <position position="381"/>
    </location>
</feature>
<feature type="sequence conflict" description="In Ref. 2; AAP69603/AAP69604/AAP69605." evidence="7" ref="2">
    <original>L</original>
    <variation>V</variation>
    <location>
        <position position="155"/>
    </location>
</feature>
<feature type="sequence conflict" description="In Ref. 1; BAF75377." evidence="7" ref="1">
    <original>V</original>
    <variation>A</variation>
    <location>
        <position position="224"/>
    </location>
</feature>
<feature type="sequence conflict" description="In Ref. 1; BAF75377." evidence="7" ref="1">
    <original>A</original>
    <variation>T</variation>
    <location>
        <position position="246"/>
    </location>
</feature>
<feature type="sequence conflict" description="In Ref. 1; BAF75377." evidence="7" ref="1">
    <original>V</original>
    <variation>A</variation>
    <location>
        <position position="375"/>
    </location>
</feature>
<feature type="helix" evidence="16">
    <location>
        <begin position="20"/>
        <end position="31"/>
    </location>
</feature>
<feature type="strand" evidence="16">
    <location>
        <begin position="35"/>
        <end position="44"/>
    </location>
</feature>
<feature type="helix" evidence="16">
    <location>
        <begin position="49"/>
        <end position="51"/>
    </location>
</feature>
<feature type="helix" evidence="16">
    <location>
        <begin position="60"/>
        <end position="66"/>
    </location>
</feature>
<feature type="helix" evidence="16">
    <location>
        <begin position="74"/>
        <end position="79"/>
    </location>
</feature>
<feature type="helix" evidence="16">
    <location>
        <begin position="89"/>
        <end position="91"/>
    </location>
</feature>
<feature type="helix" evidence="16">
    <location>
        <begin position="96"/>
        <end position="98"/>
    </location>
</feature>
<feature type="strand" evidence="16">
    <location>
        <begin position="105"/>
        <end position="108"/>
    </location>
</feature>
<feature type="strand" evidence="16">
    <location>
        <begin position="121"/>
        <end position="127"/>
    </location>
</feature>
<feature type="helix" evidence="16">
    <location>
        <begin position="128"/>
        <end position="133"/>
    </location>
</feature>
<feature type="helix" evidence="16">
    <location>
        <begin position="135"/>
        <end position="159"/>
    </location>
</feature>
<feature type="strand" evidence="16">
    <location>
        <begin position="166"/>
        <end position="168"/>
    </location>
</feature>
<feature type="helix" evidence="16">
    <location>
        <begin position="178"/>
        <end position="189"/>
    </location>
</feature>
<feature type="strand" evidence="16">
    <location>
        <begin position="192"/>
        <end position="195"/>
    </location>
</feature>
<feature type="helix" evidence="16">
    <location>
        <begin position="197"/>
        <end position="203"/>
    </location>
</feature>
<feature type="helix" evidence="16">
    <location>
        <begin position="213"/>
        <end position="216"/>
    </location>
</feature>
<feature type="strand" evidence="16">
    <location>
        <begin position="233"/>
        <end position="237"/>
    </location>
</feature>
<feature type="helix" evidence="16">
    <location>
        <begin position="242"/>
        <end position="257"/>
    </location>
</feature>
<feature type="helix" evidence="16">
    <location>
        <begin position="266"/>
        <end position="278"/>
    </location>
</feature>
<feature type="helix" evidence="16">
    <location>
        <begin position="280"/>
        <end position="282"/>
    </location>
</feature>
<feature type="strand" evidence="16">
    <location>
        <begin position="283"/>
        <end position="286"/>
    </location>
</feature>
<feature type="turn" evidence="16">
    <location>
        <begin position="292"/>
        <end position="295"/>
    </location>
</feature>
<feature type="helix" evidence="16">
    <location>
        <begin position="296"/>
        <end position="306"/>
    </location>
</feature>
<feature type="turn" evidence="16">
    <location>
        <begin position="307"/>
        <end position="310"/>
    </location>
</feature>
<feature type="strand" evidence="16">
    <location>
        <begin position="314"/>
        <end position="319"/>
    </location>
</feature>
<feature type="helix" evidence="16">
    <location>
        <begin position="324"/>
        <end position="342"/>
    </location>
</feature>
<feature type="helix" evidence="16">
    <location>
        <begin position="345"/>
        <end position="348"/>
    </location>
</feature>
<feature type="strand" evidence="16">
    <location>
        <begin position="351"/>
        <end position="354"/>
    </location>
</feature>
<feature type="helix" evidence="16">
    <location>
        <begin position="360"/>
        <end position="366"/>
    </location>
</feature>
<feature type="strand" evidence="16">
    <location>
        <begin position="375"/>
        <end position="377"/>
    </location>
</feature>
<feature type="strand" evidence="16">
    <location>
        <begin position="394"/>
        <end position="400"/>
    </location>
</feature>
<feature type="strand" evidence="16">
    <location>
        <begin position="421"/>
        <end position="427"/>
    </location>
</feature>
<feature type="strand" evidence="16">
    <location>
        <begin position="429"/>
        <end position="431"/>
    </location>
</feature>
<feature type="strand" evidence="16">
    <location>
        <begin position="433"/>
        <end position="440"/>
    </location>
</feature>
<feature type="strand" evidence="16">
    <location>
        <begin position="451"/>
        <end position="454"/>
    </location>
</feature>
<feature type="strand" evidence="16">
    <location>
        <begin position="463"/>
        <end position="465"/>
    </location>
</feature>
<feature type="strand" evidence="16">
    <location>
        <begin position="468"/>
        <end position="472"/>
    </location>
</feature>
<feature type="strand" evidence="16">
    <location>
        <begin position="475"/>
        <end position="479"/>
    </location>
</feature>
<feature type="helix" evidence="16">
    <location>
        <begin position="490"/>
        <end position="503"/>
    </location>
</feature>
<feature type="helix" evidence="16">
    <location>
        <begin position="506"/>
        <end position="509"/>
    </location>
</feature>
<feature type="strand" evidence="16">
    <location>
        <begin position="511"/>
        <end position="513"/>
    </location>
</feature>
<feature type="strand" evidence="16">
    <location>
        <begin position="518"/>
        <end position="522"/>
    </location>
</feature>
<feature type="helix" evidence="16">
    <location>
        <begin position="523"/>
        <end position="529"/>
    </location>
</feature>
<evidence type="ECO:0000250" key="1">
    <source>
        <dbReference type="UniProtKB" id="P22253"/>
    </source>
</evidence>
<evidence type="ECO:0000250" key="2">
    <source>
        <dbReference type="UniProtKB" id="Q9HJ28"/>
    </source>
</evidence>
<evidence type="ECO:0000269" key="3">
    <source>
    </source>
</evidence>
<evidence type="ECO:0000269" key="4">
    <source>
    </source>
</evidence>
<evidence type="ECO:0000269" key="5">
    <source>
    </source>
</evidence>
<evidence type="ECO:0000303" key="6">
    <source ref="2"/>
</evidence>
<evidence type="ECO:0000305" key="7"/>
<evidence type="ECO:0000305" key="8">
    <source>
    </source>
</evidence>
<evidence type="ECO:0007744" key="9">
    <source>
        <dbReference type="PDB" id="4YUB"/>
    </source>
</evidence>
<evidence type="ECO:0007744" key="10">
    <source>
    </source>
</evidence>
<evidence type="ECO:0007744" key="11">
    <source>
    </source>
</evidence>
<evidence type="ECO:0007744" key="12">
    <source>
    </source>
</evidence>
<evidence type="ECO:0007744" key="13">
    <source>
    </source>
</evidence>
<evidence type="ECO:0007744" key="14">
    <source>
    </source>
</evidence>
<evidence type="ECO:0007744" key="15">
    <source>
    </source>
</evidence>
<evidence type="ECO:0007829" key="16">
    <source>
        <dbReference type="PDB" id="4YUB"/>
    </source>
</evidence>